<feature type="chain" id="PRO_0000311328" description="Transcription factor LBX2">
    <location>
        <begin position="1"/>
        <end position="198"/>
    </location>
</feature>
<feature type="DNA-binding region" description="Homeobox" evidence="2">
    <location>
        <begin position="85"/>
        <end position="144"/>
    </location>
</feature>
<feature type="region of interest" description="Disordered" evidence="3">
    <location>
        <begin position="24"/>
        <end position="46"/>
    </location>
</feature>
<feature type="region of interest" description="Disordered" evidence="3">
    <location>
        <begin position="63"/>
        <end position="89"/>
    </location>
</feature>
<feature type="region of interest" description="Disordered" evidence="3">
    <location>
        <begin position="173"/>
        <end position="198"/>
    </location>
</feature>
<feature type="splice variant" id="VSP_029522" description="In isoform 2." evidence="6">
    <original>MNSGREPRTPRTLLSIADILAPRMVPRAPSAPQLPESGPGPTSPLCALEELTSKTFRGLDARALQPSEG</original>
    <variation>MGKRTSLEVSLGELGGEKCRGGRRSFPPLAASRPARPGGWRWARRDLCKTASRAENNSQACRPQR</variation>
    <location>
        <begin position="1"/>
        <end position="69"/>
    </location>
</feature>
<feature type="sequence variant" id="VAR_083939" description="Found in a patient with atrial septal defects; uncertain significance; dbSNP:rs753669213." evidence="4">
    <original>K</original>
    <variation>E</variation>
    <location>
        <position position="139"/>
    </location>
</feature>
<feature type="sequence variant" id="VAR_037227" description="In dbSNP:rs17009998.">
    <original>S</original>
    <variation>F</variation>
    <location>
        <position position="158"/>
    </location>
</feature>
<feature type="sequence variant" id="VAR_083940" description="Found in a patient with atrial septal defects; uncertain significance; dbSNP:rs201832456." evidence="4">
    <original>A</original>
    <variation>P</variation>
    <location>
        <position position="171"/>
    </location>
</feature>
<protein>
    <recommendedName>
        <fullName>Transcription factor LBX2</fullName>
    </recommendedName>
    <alternativeName>
        <fullName evidence="5">Ladybird homeobox 2</fullName>
    </alternativeName>
    <alternativeName>
        <fullName>Ladybird homeobox protein homolog 2</fullName>
    </alternativeName>
</protein>
<name>LBX2_HUMAN</name>
<reference key="1">
    <citation type="submission" date="2003-05" db="EMBL/GenBank/DDBJ databases">
        <authorList>
            <person name="Huang C.Q."/>
            <person name="Wu S.L."/>
            <person name="Chen Z."/>
            <person name="Shan Y.X."/>
            <person name="Liu S."/>
            <person name="Xiao P.J."/>
        </authorList>
    </citation>
    <scope>NUCLEOTIDE SEQUENCE [MRNA] (ISOFORM 2)</scope>
</reference>
<reference key="2">
    <citation type="journal article" date="2004" name="Proc. Natl. Acad. Sci. U.S.A.">
        <title>Large-scale cDNA transfection screening for genes related to cancer development and progression.</title>
        <authorList>
            <person name="Wan D."/>
            <person name="Gong Y."/>
            <person name="Qin W."/>
            <person name="Zhang P."/>
            <person name="Li J."/>
            <person name="Wei L."/>
            <person name="Zhou X."/>
            <person name="Li H."/>
            <person name="Qiu X."/>
            <person name="Zhong F."/>
            <person name="He L."/>
            <person name="Yu J."/>
            <person name="Yao G."/>
            <person name="Jiang H."/>
            <person name="Qian L."/>
            <person name="Yu Y."/>
            <person name="Shu H."/>
            <person name="Chen X."/>
            <person name="Xu H."/>
            <person name="Guo M."/>
            <person name="Pan Z."/>
            <person name="Chen Y."/>
            <person name="Ge C."/>
            <person name="Yang S."/>
            <person name="Gu J."/>
        </authorList>
    </citation>
    <scope>NUCLEOTIDE SEQUENCE [LARGE SCALE MRNA] (ISOFORM 1)</scope>
</reference>
<reference key="3">
    <citation type="submission" date="2005-09" db="EMBL/GenBank/DDBJ databases">
        <authorList>
            <person name="Mural R.J."/>
            <person name="Istrail S."/>
            <person name="Sutton G.G."/>
            <person name="Florea L."/>
            <person name="Halpern A.L."/>
            <person name="Mobarry C.M."/>
            <person name="Lippert R."/>
            <person name="Walenz B."/>
            <person name="Shatkay H."/>
            <person name="Dew I."/>
            <person name="Miller J.R."/>
            <person name="Flanigan M.J."/>
            <person name="Edwards N.J."/>
            <person name="Bolanos R."/>
            <person name="Fasulo D."/>
            <person name="Halldorsson B.V."/>
            <person name="Hannenhalli S."/>
            <person name="Turner R."/>
            <person name="Yooseph S."/>
            <person name="Lu F."/>
            <person name="Nusskern D.R."/>
            <person name="Shue B.C."/>
            <person name="Zheng X.H."/>
            <person name="Zhong F."/>
            <person name="Delcher A.L."/>
            <person name="Huson D.H."/>
            <person name="Kravitz S.A."/>
            <person name="Mouchard L."/>
            <person name="Reinert K."/>
            <person name="Remington K.A."/>
            <person name="Clark A.G."/>
            <person name="Waterman M.S."/>
            <person name="Eichler E.E."/>
            <person name="Adams M.D."/>
            <person name="Hunkapiller M.W."/>
            <person name="Myers E.W."/>
            <person name="Venter J.C."/>
        </authorList>
    </citation>
    <scope>NUCLEOTIDE SEQUENCE [LARGE SCALE GENOMIC DNA]</scope>
</reference>
<reference key="4">
    <citation type="journal article" date="2004" name="Genome Res.">
        <title>The status, quality, and expansion of the NIH full-length cDNA project: the Mammalian Gene Collection (MGC).</title>
        <authorList>
            <consortium name="The MGC Project Team"/>
        </authorList>
    </citation>
    <scope>NUCLEOTIDE SEQUENCE [LARGE SCALE MRNA] (ISOFORM 1)</scope>
</reference>
<reference key="5">
    <citation type="journal article" date="2001" name="Genomics">
        <title>Characterization of the murine Lbx2 promoter, identification of the human homologue, and evaluation as a candidate for Alstrom syndrome.</title>
        <authorList>
            <person name="Chen F."/>
            <person name="Collin G.B."/>
            <person name="Liu K.C."/>
            <person name="Beier D.R."/>
            <person name="Eccles M."/>
            <person name="Nishina P.M."/>
            <person name="Moshang T."/>
            <person name="Epstein J.A."/>
        </authorList>
    </citation>
    <scope>IDENTIFICATION</scope>
</reference>
<reference key="6">
    <citation type="journal article" date="2018" name="Int. J. Cardiol.">
        <title>Identification of LBX2 as a novel causal gene of atrial septal defect.</title>
        <authorList>
            <person name="Wang J."/>
            <person name="Luo J."/>
            <person name="Chen Q."/>
            <person name="Wang X."/>
            <person name="He J."/>
            <person name="Zhang W."/>
            <person name="Yin Z."/>
            <person name="Zheng F."/>
            <person name="Pan H."/>
            <person name="Li T."/>
            <person name="Lou Q."/>
            <person name="Wang B."/>
        </authorList>
    </citation>
    <scope>VARIANTS GLU-139 AND PRO-171</scope>
</reference>
<proteinExistence type="evidence at protein level"/>
<dbReference type="EMBL" id="AY305861">
    <property type="protein sequence ID" value="AAP74384.1"/>
    <property type="molecule type" value="mRNA"/>
</dbReference>
<dbReference type="EMBL" id="AY203953">
    <property type="protein sequence ID" value="AAP34476.1"/>
    <property type="molecule type" value="mRNA"/>
</dbReference>
<dbReference type="EMBL" id="CH471053">
    <property type="protein sequence ID" value="EAW99636.1"/>
    <property type="molecule type" value="Genomic_DNA"/>
</dbReference>
<dbReference type="EMBL" id="BC150517">
    <property type="protein sequence ID" value="AAI50518.1"/>
    <property type="molecule type" value="mRNA"/>
</dbReference>
<dbReference type="CCDS" id="CCDS33228.1">
    <molecule id="Q6XYB7-2"/>
</dbReference>
<dbReference type="CCDS" id="CCDS62938.1">
    <molecule id="Q6XYB7-1"/>
</dbReference>
<dbReference type="RefSeq" id="NP_001009812.1">
    <molecule id="Q6XYB7-2"/>
    <property type="nucleotide sequence ID" value="NM_001009812.2"/>
</dbReference>
<dbReference type="RefSeq" id="NP_001269359.1">
    <molecule id="Q6XYB7-1"/>
    <property type="nucleotide sequence ID" value="NM_001282430.2"/>
</dbReference>
<dbReference type="SMR" id="Q6XYB7"/>
<dbReference type="BioGRID" id="124550">
    <property type="interactions" value="19"/>
</dbReference>
<dbReference type="FunCoup" id="Q6XYB7">
    <property type="interactions" value="207"/>
</dbReference>
<dbReference type="IntAct" id="Q6XYB7">
    <property type="interactions" value="7"/>
</dbReference>
<dbReference type="STRING" id="9606.ENSP00000366789"/>
<dbReference type="GlyGen" id="Q6XYB7">
    <property type="glycosylation" value="1 site"/>
</dbReference>
<dbReference type="iPTMnet" id="Q6XYB7"/>
<dbReference type="BioMuta" id="LBX2"/>
<dbReference type="DMDM" id="74749508"/>
<dbReference type="MassIVE" id="Q6XYB7"/>
<dbReference type="PaxDb" id="9606-ENSP00000366789"/>
<dbReference type="ProteomicsDB" id="67823">
    <molecule id="Q6XYB7-2"/>
</dbReference>
<dbReference type="Antibodypedia" id="31549">
    <property type="antibodies" value="116 antibodies from 15 providers"/>
</dbReference>
<dbReference type="DNASU" id="85474"/>
<dbReference type="Ensembl" id="ENST00000377566.9">
    <molecule id="Q6XYB7-1"/>
    <property type="protein sequence ID" value="ENSP00000366789.4"/>
    <property type="gene ID" value="ENSG00000179528.16"/>
</dbReference>
<dbReference type="Ensembl" id="ENST00000460508.3">
    <molecule id="Q6XYB7-2"/>
    <property type="protein sequence ID" value="ENSP00000417116.2"/>
    <property type="gene ID" value="ENSG00000179528.16"/>
</dbReference>
<dbReference type="GeneID" id="85474"/>
<dbReference type="KEGG" id="hsa:85474"/>
<dbReference type="MANE-Select" id="ENST00000377566.9">
    <property type="protein sequence ID" value="ENSP00000366789.4"/>
    <property type="RefSeq nucleotide sequence ID" value="NM_001282430.2"/>
    <property type="RefSeq protein sequence ID" value="NP_001269359.1"/>
</dbReference>
<dbReference type="UCSC" id="uc002slv.6">
    <molecule id="Q6XYB7-1"/>
    <property type="organism name" value="human"/>
</dbReference>
<dbReference type="AGR" id="HGNC:15525"/>
<dbReference type="CTD" id="85474"/>
<dbReference type="DisGeNET" id="85474"/>
<dbReference type="GeneCards" id="LBX2"/>
<dbReference type="HGNC" id="HGNC:15525">
    <property type="gene designation" value="LBX2"/>
</dbReference>
<dbReference type="HPA" id="ENSG00000179528">
    <property type="expression patterns" value="Group enriched (intestine, liver, stomach)"/>
</dbReference>
<dbReference type="MIM" id="607164">
    <property type="type" value="gene"/>
</dbReference>
<dbReference type="neXtProt" id="NX_Q6XYB7"/>
<dbReference type="OpenTargets" id="ENSG00000179528"/>
<dbReference type="PharmGKB" id="PA30305"/>
<dbReference type="VEuPathDB" id="HostDB:ENSG00000179528"/>
<dbReference type="eggNOG" id="KOG0488">
    <property type="taxonomic scope" value="Eukaryota"/>
</dbReference>
<dbReference type="GeneTree" id="ENSGT00940000162295"/>
<dbReference type="HOGENOM" id="CLU_086390_0_0_1"/>
<dbReference type="InParanoid" id="Q6XYB7"/>
<dbReference type="OMA" id="EVQCRLS"/>
<dbReference type="OrthoDB" id="6159439at2759"/>
<dbReference type="PAN-GO" id="Q6XYB7">
    <property type="GO annotations" value="4 GO annotations based on evolutionary models"/>
</dbReference>
<dbReference type="PhylomeDB" id="Q6XYB7"/>
<dbReference type="TreeFam" id="TF325047"/>
<dbReference type="PathwayCommons" id="Q6XYB7"/>
<dbReference type="SignaLink" id="Q6XYB7"/>
<dbReference type="BioGRID-ORCS" id="85474">
    <property type="hits" value="10 hits in 1175 CRISPR screens"/>
</dbReference>
<dbReference type="GenomeRNAi" id="85474"/>
<dbReference type="Pharos" id="Q6XYB7">
    <property type="development level" value="Tbio"/>
</dbReference>
<dbReference type="PRO" id="PR:Q6XYB7"/>
<dbReference type="Proteomes" id="UP000005640">
    <property type="component" value="Chromosome 2"/>
</dbReference>
<dbReference type="RNAct" id="Q6XYB7">
    <property type="molecule type" value="protein"/>
</dbReference>
<dbReference type="Bgee" id="ENSG00000179528">
    <property type="expression patterns" value="Expressed in right lobe of liver and 89 other cell types or tissues"/>
</dbReference>
<dbReference type="ExpressionAtlas" id="Q6XYB7">
    <property type="expression patterns" value="baseline and differential"/>
</dbReference>
<dbReference type="GO" id="GO:0000785">
    <property type="term" value="C:chromatin"/>
    <property type="evidence" value="ECO:0000247"/>
    <property type="project" value="NTNU_SB"/>
</dbReference>
<dbReference type="GO" id="GO:0005634">
    <property type="term" value="C:nucleus"/>
    <property type="evidence" value="ECO:0000318"/>
    <property type="project" value="GO_Central"/>
</dbReference>
<dbReference type="GO" id="GO:0000981">
    <property type="term" value="F:DNA-binding transcription factor activity, RNA polymerase II-specific"/>
    <property type="evidence" value="ECO:0000247"/>
    <property type="project" value="NTNU_SB"/>
</dbReference>
<dbReference type="GO" id="GO:1990837">
    <property type="term" value="F:sequence-specific double-stranded DNA binding"/>
    <property type="evidence" value="ECO:0000314"/>
    <property type="project" value="ARUK-UCL"/>
</dbReference>
<dbReference type="GO" id="GO:0042692">
    <property type="term" value="P:muscle cell differentiation"/>
    <property type="evidence" value="ECO:0000250"/>
    <property type="project" value="UniProtKB"/>
</dbReference>
<dbReference type="GO" id="GO:1904105">
    <property type="term" value="P:positive regulation of convergent extension involved in gastrulation"/>
    <property type="evidence" value="ECO:0000250"/>
    <property type="project" value="UniProtKB"/>
</dbReference>
<dbReference type="GO" id="GO:2000052">
    <property type="term" value="P:positive regulation of non-canonical Wnt signaling pathway"/>
    <property type="evidence" value="ECO:0000250"/>
    <property type="project" value="UniProtKB"/>
</dbReference>
<dbReference type="GO" id="GO:0006357">
    <property type="term" value="P:regulation of transcription by RNA polymerase II"/>
    <property type="evidence" value="ECO:0000318"/>
    <property type="project" value="GO_Central"/>
</dbReference>
<dbReference type="CDD" id="cd00086">
    <property type="entry name" value="homeodomain"/>
    <property type="match status" value="1"/>
</dbReference>
<dbReference type="FunFam" id="1.10.10.60:FF:000779">
    <property type="entry name" value="Ladybird homeobox 2"/>
    <property type="match status" value="1"/>
</dbReference>
<dbReference type="Gene3D" id="1.10.10.60">
    <property type="entry name" value="Homeodomain-like"/>
    <property type="match status" value="1"/>
</dbReference>
<dbReference type="InterPro" id="IPR001356">
    <property type="entry name" value="HD"/>
</dbReference>
<dbReference type="InterPro" id="IPR009057">
    <property type="entry name" value="Homeodomain-like_sf"/>
</dbReference>
<dbReference type="InterPro" id="IPR051892">
    <property type="entry name" value="LBX_TF"/>
</dbReference>
<dbReference type="PANTHER" id="PTHR24336">
    <property type="entry name" value="TRANSCRIPTION FACTOR LBX"/>
    <property type="match status" value="1"/>
</dbReference>
<dbReference type="PANTHER" id="PTHR24336:SF10">
    <property type="entry name" value="TRANSCRIPTION FACTOR LBX2"/>
    <property type="match status" value="1"/>
</dbReference>
<dbReference type="Pfam" id="PF00046">
    <property type="entry name" value="Homeodomain"/>
    <property type="match status" value="1"/>
</dbReference>
<dbReference type="SMART" id="SM00389">
    <property type="entry name" value="HOX"/>
    <property type="match status" value="1"/>
</dbReference>
<dbReference type="SUPFAM" id="SSF46689">
    <property type="entry name" value="Homeodomain-like"/>
    <property type="match status" value="1"/>
</dbReference>
<dbReference type="PROSITE" id="PS50071">
    <property type="entry name" value="HOMEOBOX_2"/>
    <property type="match status" value="1"/>
</dbReference>
<accession>Q6XYB7</accession>
<accession>Q7Z5Y8</accession>
<keyword id="KW-0025">Alternative splicing</keyword>
<keyword id="KW-0238">DNA-binding</keyword>
<keyword id="KW-0371">Homeobox</keyword>
<keyword id="KW-0539">Nucleus</keyword>
<keyword id="KW-1185">Reference proteome</keyword>
<keyword id="KW-0804">Transcription</keyword>
<keyword id="KW-0805">Transcription regulation</keyword>
<evidence type="ECO:0000250" key="1">
    <source>
        <dbReference type="UniProtKB" id="Q804R0"/>
    </source>
</evidence>
<evidence type="ECO:0000255" key="2">
    <source>
        <dbReference type="PROSITE-ProRule" id="PRU00108"/>
    </source>
</evidence>
<evidence type="ECO:0000256" key="3">
    <source>
        <dbReference type="SAM" id="MobiDB-lite"/>
    </source>
</evidence>
<evidence type="ECO:0000269" key="4">
    <source>
    </source>
</evidence>
<evidence type="ECO:0000303" key="5">
    <source>
    </source>
</evidence>
<evidence type="ECO:0000303" key="6">
    <source ref="1"/>
</evidence>
<sequence length="198" mass="21482">MNSGREPRTPRTLLSIADILAPRMVPRAPSAPQLPESGPGPTSPLCALEELTSKTFRGLDARALQPSEGRAGPDALGPGPFGRKRRKSRTAFTAQQVLELERRFVFQKYLAPSERDGLATRLGLANAQVVTWFQNRRAKLKRDVEEMRADVASLRALSPEVLCSLALPEGAPDPGLCLGPAGPDSRPHLSDEEIQVDD</sequence>
<organism>
    <name type="scientific">Homo sapiens</name>
    <name type="common">Human</name>
    <dbReference type="NCBI Taxonomy" id="9606"/>
    <lineage>
        <taxon>Eukaryota</taxon>
        <taxon>Metazoa</taxon>
        <taxon>Chordata</taxon>
        <taxon>Craniata</taxon>
        <taxon>Vertebrata</taxon>
        <taxon>Euteleostomi</taxon>
        <taxon>Mammalia</taxon>
        <taxon>Eutheria</taxon>
        <taxon>Euarchontoglires</taxon>
        <taxon>Primates</taxon>
        <taxon>Haplorrhini</taxon>
        <taxon>Catarrhini</taxon>
        <taxon>Hominidae</taxon>
        <taxon>Homo</taxon>
    </lineage>
</organism>
<comment type="function">
    <text evidence="1">Transcription factor.</text>
</comment>
<comment type="interaction">
    <interactant intactId="EBI-12029900">
        <id>Q6XYB7-2</id>
    </interactant>
    <interactant intactId="EBI-12029902">
        <id>P50750-2</id>
        <label>CDK9</label>
    </interactant>
    <organismsDiffer>false</organismsDiffer>
    <experiments>3</experiments>
</comment>
<comment type="subcellular location">
    <subcellularLocation>
        <location evidence="2">Nucleus</location>
    </subcellularLocation>
</comment>
<comment type="alternative products">
    <event type="alternative splicing"/>
    <isoform>
        <id>Q6XYB7-1</id>
        <name>1</name>
        <sequence type="displayed"/>
    </isoform>
    <isoform>
        <id>Q6XYB7-2</id>
        <name>2</name>
        <sequence type="described" ref="VSP_029522"/>
    </isoform>
</comment>
<gene>
    <name type="primary">LBX2</name>
    <name type="ORF">LP3727</name>
</gene>